<keyword id="KW-0002">3D-structure</keyword>
<keyword id="KW-0007">Acetylation</keyword>
<keyword id="KW-0056">Arginine metabolism</keyword>
<keyword id="KW-0067">ATP-binding</keyword>
<keyword id="KW-0106">Calcium</keyword>
<keyword id="KW-0418">Kinase</keyword>
<keyword id="KW-0479">Metal-binding</keyword>
<keyword id="KW-0547">Nucleotide-binding</keyword>
<keyword id="KW-0539">Nucleus</keyword>
<keyword id="KW-0597">Phosphoprotein</keyword>
<keyword id="KW-1185">Reference proteome</keyword>
<keyword id="KW-0804">Transcription</keyword>
<keyword id="KW-0805">Transcription regulation</keyword>
<keyword id="KW-0808">Transferase</keyword>
<evidence type="ECO:0000250" key="1"/>
<evidence type="ECO:0000256" key="2">
    <source>
        <dbReference type="SAM" id="MobiDB-lite"/>
    </source>
</evidence>
<evidence type="ECO:0000269" key="3">
    <source>
    </source>
</evidence>
<evidence type="ECO:0000269" key="4">
    <source>
    </source>
</evidence>
<evidence type="ECO:0000269" key="5">
    <source>
    </source>
</evidence>
<evidence type="ECO:0000269" key="6">
    <source>
    </source>
</evidence>
<evidence type="ECO:0000269" key="7">
    <source>
    </source>
</evidence>
<evidence type="ECO:0000269" key="8">
    <source>
    </source>
</evidence>
<evidence type="ECO:0000269" key="9">
    <source>
    </source>
</evidence>
<evidence type="ECO:0000269" key="10">
    <source>
    </source>
</evidence>
<evidence type="ECO:0000269" key="11">
    <source>
    </source>
</evidence>
<evidence type="ECO:0000269" key="12">
    <source>
    </source>
</evidence>
<evidence type="ECO:0000269" key="13">
    <source>
    </source>
</evidence>
<evidence type="ECO:0000269" key="14">
    <source>
    </source>
</evidence>
<evidence type="ECO:0000269" key="15">
    <source>
    </source>
</evidence>
<evidence type="ECO:0000269" key="16">
    <source>
    </source>
</evidence>
<evidence type="ECO:0000269" key="17">
    <source>
    </source>
</evidence>
<evidence type="ECO:0000269" key="18">
    <source>
    </source>
</evidence>
<evidence type="ECO:0000269" key="19">
    <source>
    </source>
</evidence>
<evidence type="ECO:0000269" key="20">
    <source>
    </source>
</evidence>
<evidence type="ECO:0000269" key="21">
    <source>
    </source>
</evidence>
<evidence type="ECO:0000303" key="22">
    <source>
    </source>
</evidence>
<evidence type="ECO:0000303" key="23">
    <source>
    </source>
</evidence>
<evidence type="ECO:0000305" key="24"/>
<evidence type="ECO:0000305" key="25">
    <source>
    </source>
</evidence>
<evidence type="ECO:0000305" key="26">
    <source>
    </source>
</evidence>
<evidence type="ECO:0000305" key="27">
    <source>
    </source>
</evidence>
<evidence type="ECO:0007744" key="28">
    <source>
        <dbReference type="PDB" id="2IEW"/>
    </source>
</evidence>
<evidence type="ECO:0007744" key="29">
    <source>
        <dbReference type="PDB" id="2IF8"/>
    </source>
</evidence>
<evidence type="ECO:0007744" key="30">
    <source>
    </source>
</evidence>
<evidence type="ECO:0007744" key="31">
    <source>
    </source>
</evidence>
<evidence type="ECO:0007829" key="32">
    <source>
        <dbReference type="PDB" id="2IEW"/>
    </source>
</evidence>
<accession>P07250</accession>
<accession>D6VSF5</accession>
<accession>E9P8S7</accession>
<comment type="function">
    <text evidence="3 4 5 6 7 8 9 10 11 13 14 16 17 18 21">Inositol phosphate kinase with both monophosphoinositol and diphosphoinositol polyphosphate synthase activities. Able to phosphorylate inositol 1,4,5-trisphosphate (Ins(1,4,5)P3) on both the carbon-3 and carbon-6 positions to synthesize inositol 1,3,4,5-tetrakisphosphate (Ins(1,3,4,5)P4) and inositol 1,4,5,6-tetrakisphosphate (Ins(1,4,5,6)P4), and then to subsequently phosphorylate and convert either isomer of InsP4 to inositol 1,3,4,5,6-pentakisphosphate (Ins(1,3,4,5,6)P5) (PubMed:10574768, PubMed:10683435, PubMed:11311242). Its predominant in vivo catalytic function is to convert Ins(1,4,5)P3 to Ins(1,4,5,6)P4 to Ins(1,3,4,5,6)P5 via 6- and 3-kinase activities (PubMed:15944147). It can also use Ins(1,3,4,5,6)P5 as a substrate and act as a diphosphoinositol polyphosphate synthase to generate two different isomers of PP-InsP4 (PubMed:11311242). Also has a role in transcription regulation. Forms a complex with ARG80, ARG81 and MCM1 (ArgR-MCM1), which coordinates the expression of arginine anabolic and catabolic genes in response to arginine. Recruits ARG80 and MCM21 to stabilize them (PubMed:10632874, PubMed:3298999, PubMed:8043104). Neither the kinase activity nor inositol phosphates are required for the formation of ArgR-MCM1 transcriptional complexes on DNA promoter elements and the control of arginine metabolism (PubMed:10720331, PubMed:11119723, PubMed:12828642, PubMed:22992733). In contrast, only the catalytic activity is required for PHO gene repression by phosphate and for NCR gene activation in response to nitrogen availability, indicating a role for inositol pyrophosphates in these controls (PubMed:12828642). Inositol polyphosphates may be involved in the regulation of chromatin remodeling of transcription (PubMed:12434012). Regulates nuclear mRNA export via inositol phosphate metabolism (PubMed:10390371, PubMed:10683435). Also has lipid kinase activity, transforming the lipid inositol phosphatidylinositol 4,5-bisphosphate (PI(4,5)P2) into phosphatidylinositol 3,4,5-trisphosphate (PI(3,4,5)P3) in the nucleus (PubMed:16123124). Its kinase activity is necessary for the propagation of most [PSI+] prion variants (PubMed:28923943).</text>
</comment>
<comment type="catalytic activity">
    <reaction evidence="4">
        <text>1D-myo-inositol 1,4,5-trisphosphate + 2 ATP = 1D-myo-inositol 1,3,4,5,6-pentakisphosphate + 2 ADP + 2 H(+)</text>
        <dbReference type="Rhea" id="RHEA:32359"/>
        <dbReference type="ChEBI" id="CHEBI:15378"/>
        <dbReference type="ChEBI" id="CHEBI:30616"/>
        <dbReference type="ChEBI" id="CHEBI:57733"/>
        <dbReference type="ChEBI" id="CHEBI:203600"/>
        <dbReference type="ChEBI" id="CHEBI:456216"/>
        <dbReference type="EC" id="2.7.1.151"/>
    </reaction>
</comment>
<comment type="catalytic activity">
    <reaction evidence="6 7 20">
        <text>1D-myo-inositol 1,4,5-trisphosphate + ATP = 1D-myo-inositol 1,4,5,6-tetrakisphosphate + ADP + H(+)</text>
        <dbReference type="Rhea" id="RHEA:17717"/>
        <dbReference type="ChEBI" id="CHEBI:15378"/>
        <dbReference type="ChEBI" id="CHEBI:30616"/>
        <dbReference type="ChEBI" id="CHEBI:57627"/>
        <dbReference type="ChEBI" id="CHEBI:203600"/>
        <dbReference type="ChEBI" id="CHEBI:456216"/>
    </reaction>
    <physiologicalReaction direction="left-to-right" evidence="25 26 27">
        <dbReference type="Rhea" id="RHEA:17718"/>
    </physiologicalReaction>
</comment>
<comment type="catalytic activity">
    <reaction evidence="6">
        <text>1D-myo-inositol 1,4,5-trisphosphate + ATP = 1D-myo-inositol 1,3,4,5-tetrakisphosphate + ADP + H(+)</text>
        <dbReference type="Rhea" id="RHEA:11020"/>
        <dbReference type="ChEBI" id="CHEBI:15378"/>
        <dbReference type="ChEBI" id="CHEBI:30616"/>
        <dbReference type="ChEBI" id="CHEBI:57895"/>
        <dbReference type="ChEBI" id="CHEBI:203600"/>
        <dbReference type="ChEBI" id="CHEBI:456216"/>
        <dbReference type="EC" id="2.7.1.127"/>
    </reaction>
    <physiologicalReaction direction="left-to-right" evidence="25">
        <dbReference type="Rhea" id="RHEA:11021"/>
    </physiologicalReaction>
</comment>
<comment type="catalytic activity">
    <reaction evidence="6 7">
        <text>1D-myo-inositol 1,4,5,6-tetrakisphosphate + ATP = 1D-myo-inositol 1,3,4,5,6-pentakisphosphate + ADP + H(+)</text>
        <dbReference type="Rhea" id="RHEA:11856"/>
        <dbReference type="ChEBI" id="CHEBI:15378"/>
        <dbReference type="ChEBI" id="CHEBI:30616"/>
        <dbReference type="ChEBI" id="CHEBI:57627"/>
        <dbReference type="ChEBI" id="CHEBI:57733"/>
        <dbReference type="ChEBI" id="CHEBI:456216"/>
    </reaction>
    <physiologicalReaction direction="left-to-right" evidence="25 26">
        <dbReference type="Rhea" id="RHEA:11857"/>
    </physiologicalReaction>
</comment>
<comment type="catalytic activity">
    <reaction evidence="14">
        <text>a 1,2-diacyl-sn-glycero-3-phospho-(1D-myo-inositol-4,5-bisphosphate) + ATP = a 1,2-diacyl-sn-glycero-3-phospho-(1D-myo-inositol-3,4,5-trisphosphate) + ADP + H(+)</text>
        <dbReference type="Rhea" id="RHEA:21292"/>
        <dbReference type="ChEBI" id="CHEBI:15378"/>
        <dbReference type="ChEBI" id="CHEBI:30616"/>
        <dbReference type="ChEBI" id="CHEBI:57836"/>
        <dbReference type="ChEBI" id="CHEBI:58456"/>
        <dbReference type="ChEBI" id="CHEBI:456216"/>
    </reaction>
    <physiologicalReaction direction="left-to-right" evidence="14">
        <dbReference type="Rhea" id="RHEA:21293"/>
    </physiologicalReaction>
</comment>
<comment type="cofactor">
    <cofactor evidence="15">
        <name>Ca(2+)</name>
        <dbReference type="ChEBI" id="CHEBI:29108"/>
    </cofactor>
</comment>
<comment type="biophysicochemical properties">
    <kinetics>
        <KM evidence="9">15.3 uM for 1D-myo-inositol 1,4,5-trisphosphate</KM>
        <KM evidence="20">7.1 uM for 1D-myo-inositol 1,4,5-trisphosphate</KM>
        <KM evidence="9">62 uM for 1D-myo-inositol 1,3,4,5,6-pentakisphosphate</KM>
        <KM evidence="9">30 uM for phosphatidylinositol 4,5-bisphosphate</KM>
        <KM evidence="20">2.1 mM for ATP</KM>
        <Vmax evidence="9">6272.0 nmol/min/mg enzyme for 1D-myo-inositol 1,4,5-trisphosphate</Vmax>
        <Vmax evidence="9">4.9 nmol/min/mg enzyme for 1D-myo-inositol 1,3,4,5,6-pentakisphosphate</Vmax>
    </kinetics>
</comment>
<comment type="subunit">
    <text evidence="5 15">Interacts with ARG80 and MCM1.</text>
</comment>
<comment type="subcellular location">
    <subcellularLocation>
        <location evidence="5 14 19">Nucleus</location>
    </subcellularLocation>
</comment>
<comment type="disruption phenotype">
    <text evidence="6 7">Impairs nuclear mRNA export, slows cell growth, increases cellular InsP3 170-fold and decreases InsP6 100-fold.</text>
</comment>
<comment type="miscellaneous">
    <text evidence="19">The expression of this protein is not effected by the presence of arginine.</text>
</comment>
<comment type="miscellaneous">
    <text evidence="12">Present with 2720 molecules/cell in log phase SD medium.</text>
</comment>
<comment type="similarity">
    <text evidence="24">Belongs to the inositol phosphokinase (IPK) family.</text>
</comment>
<gene>
    <name type="primary">ARG82</name>
    <name type="synonym">ARGR3</name>
    <name evidence="22" type="synonym">GSL3</name>
    <name evidence="23" type="synonym">IPK2</name>
    <name type="ordered locus">YDR173C</name>
    <name type="ORF">YD9395.06C</name>
</gene>
<reference key="1">
    <citation type="journal article" date="1987" name="Mol. Gen. Genet.">
        <title>Characterization of two genes, ARGRI and ARGRIII required for specific regulation of arginine metabolism in yeast.</title>
        <authorList>
            <person name="Dubois E."/>
            <person name="Bercy J."/>
            <person name="Messenguy F."/>
        </authorList>
    </citation>
    <scope>NUCLEOTIDE SEQUENCE [GENOMIC DNA]</scope>
    <scope>FUNCTION</scope>
</reference>
<reference key="2">
    <citation type="journal article" date="1997" name="Nature">
        <title>The nucleotide sequence of Saccharomyces cerevisiae chromosome IV.</title>
        <authorList>
            <person name="Jacq C."/>
            <person name="Alt-Moerbe J."/>
            <person name="Andre B."/>
            <person name="Arnold W."/>
            <person name="Bahr A."/>
            <person name="Ballesta J.P.G."/>
            <person name="Bargues M."/>
            <person name="Baron L."/>
            <person name="Becker A."/>
            <person name="Biteau N."/>
            <person name="Bloecker H."/>
            <person name="Blugeon C."/>
            <person name="Boskovic J."/>
            <person name="Brandt P."/>
            <person name="Brueckner M."/>
            <person name="Buitrago M.J."/>
            <person name="Coster F."/>
            <person name="Delaveau T."/>
            <person name="del Rey F."/>
            <person name="Dujon B."/>
            <person name="Eide L.G."/>
            <person name="Garcia-Cantalejo J.M."/>
            <person name="Goffeau A."/>
            <person name="Gomez-Peris A."/>
            <person name="Granotier C."/>
            <person name="Hanemann V."/>
            <person name="Hankeln T."/>
            <person name="Hoheisel J.D."/>
            <person name="Jaeger W."/>
            <person name="Jimenez A."/>
            <person name="Jonniaux J.-L."/>
            <person name="Kraemer C."/>
            <person name="Kuester H."/>
            <person name="Laamanen P."/>
            <person name="Legros Y."/>
            <person name="Louis E.J."/>
            <person name="Moeller-Rieker S."/>
            <person name="Monnet A."/>
            <person name="Moro M."/>
            <person name="Mueller-Auer S."/>
            <person name="Nussbaumer B."/>
            <person name="Paricio N."/>
            <person name="Paulin L."/>
            <person name="Perea J."/>
            <person name="Perez-Alonso M."/>
            <person name="Perez-Ortin J.E."/>
            <person name="Pohl T.M."/>
            <person name="Prydz H."/>
            <person name="Purnelle B."/>
            <person name="Rasmussen S.W."/>
            <person name="Remacha M.A."/>
            <person name="Revuelta J.L."/>
            <person name="Rieger M."/>
            <person name="Salom D."/>
            <person name="Saluz H.P."/>
            <person name="Saiz J.E."/>
            <person name="Saren A.-M."/>
            <person name="Schaefer M."/>
            <person name="Scharfe M."/>
            <person name="Schmidt E.R."/>
            <person name="Schneider C."/>
            <person name="Scholler P."/>
            <person name="Schwarz S."/>
            <person name="Soler-Mira A."/>
            <person name="Urrestarazu L.A."/>
            <person name="Verhasselt P."/>
            <person name="Vissers S."/>
            <person name="Voet M."/>
            <person name="Volckaert G."/>
            <person name="Wagner G."/>
            <person name="Wambutt R."/>
            <person name="Wedler E."/>
            <person name="Wedler H."/>
            <person name="Woelfl S."/>
            <person name="Harris D.E."/>
            <person name="Bowman S."/>
            <person name="Brown D."/>
            <person name="Churcher C.M."/>
            <person name="Connor R."/>
            <person name="Dedman K."/>
            <person name="Gentles S."/>
            <person name="Hamlin N."/>
            <person name="Hunt S."/>
            <person name="Jones L."/>
            <person name="McDonald S."/>
            <person name="Murphy L.D."/>
            <person name="Niblett D."/>
            <person name="Odell C."/>
            <person name="Oliver K."/>
            <person name="Rajandream M.A."/>
            <person name="Richards C."/>
            <person name="Shore L."/>
            <person name="Walsh S.V."/>
            <person name="Barrell B.G."/>
            <person name="Dietrich F.S."/>
            <person name="Mulligan J.T."/>
            <person name="Allen E."/>
            <person name="Araujo R."/>
            <person name="Aviles E."/>
            <person name="Berno A."/>
            <person name="Carpenter J."/>
            <person name="Chen E."/>
            <person name="Cherry J.M."/>
            <person name="Chung E."/>
            <person name="Duncan M."/>
            <person name="Hunicke-Smith S."/>
            <person name="Hyman R.W."/>
            <person name="Komp C."/>
            <person name="Lashkari D."/>
            <person name="Lew H."/>
            <person name="Lin D."/>
            <person name="Mosedale D."/>
            <person name="Nakahara K."/>
            <person name="Namath A."/>
            <person name="Oefner P."/>
            <person name="Oh C."/>
            <person name="Petel F.X."/>
            <person name="Roberts D."/>
            <person name="Schramm S."/>
            <person name="Schroeder M."/>
            <person name="Shogren T."/>
            <person name="Shroff N."/>
            <person name="Winant A."/>
            <person name="Yelton M.A."/>
            <person name="Botstein D."/>
            <person name="Davis R.W."/>
            <person name="Johnston M."/>
            <person name="Andrews S."/>
            <person name="Brinkman R."/>
            <person name="Cooper J."/>
            <person name="Ding H."/>
            <person name="Du Z."/>
            <person name="Favello A."/>
            <person name="Fulton L."/>
            <person name="Gattung S."/>
            <person name="Greco T."/>
            <person name="Hallsworth K."/>
            <person name="Hawkins J."/>
            <person name="Hillier L.W."/>
            <person name="Jier M."/>
            <person name="Johnson D."/>
            <person name="Johnston L."/>
            <person name="Kirsten J."/>
            <person name="Kucaba T."/>
            <person name="Langston Y."/>
            <person name="Latreille P."/>
            <person name="Le T."/>
            <person name="Mardis E."/>
            <person name="Menezes S."/>
            <person name="Miller N."/>
            <person name="Nhan M."/>
            <person name="Pauley A."/>
            <person name="Peluso D."/>
            <person name="Rifkin L."/>
            <person name="Riles L."/>
            <person name="Taich A."/>
            <person name="Trevaskis E."/>
            <person name="Vignati D."/>
            <person name="Wilcox L."/>
            <person name="Wohldman P."/>
            <person name="Vaudin M."/>
            <person name="Wilson R."/>
            <person name="Waterston R."/>
            <person name="Albermann K."/>
            <person name="Hani J."/>
            <person name="Heumann K."/>
            <person name="Kleine K."/>
            <person name="Mewes H.-W."/>
            <person name="Zollner A."/>
            <person name="Zaccaria P."/>
        </authorList>
    </citation>
    <scope>NUCLEOTIDE SEQUENCE [LARGE SCALE GENOMIC DNA]</scope>
    <source>
        <strain>ATCC 204508 / S288c</strain>
    </source>
</reference>
<reference key="3">
    <citation type="journal article" date="2014" name="G3 (Bethesda)">
        <title>The reference genome sequence of Saccharomyces cerevisiae: Then and now.</title>
        <authorList>
            <person name="Engel S.R."/>
            <person name="Dietrich F.S."/>
            <person name="Fisk D.G."/>
            <person name="Binkley G."/>
            <person name="Balakrishnan R."/>
            <person name="Costanzo M.C."/>
            <person name="Dwight S.S."/>
            <person name="Hitz B.C."/>
            <person name="Karra K."/>
            <person name="Nash R.S."/>
            <person name="Weng S."/>
            <person name="Wong E.D."/>
            <person name="Lloyd P."/>
            <person name="Skrzypek M.S."/>
            <person name="Miyasato S.R."/>
            <person name="Simison M."/>
            <person name="Cherry J.M."/>
        </authorList>
    </citation>
    <scope>GENOME REANNOTATION</scope>
    <source>
        <strain>ATCC 204508 / S288c</strain>
    </source>
</reference>
<reference key="4">
    <citation type="journal article" date="2007" name="Genome Res.">
        <title>Approaching a complete repository of sequence-verified protein-encoding clones for Saccharomyces cerevisiae.</title>
        <authorList>
            <person name="Hu Y."/>
            <person name="Rolfs A."/>
            <person name="Bhullar B."/>
            <person name="Murthy T.V.S."/>
            <person name="Zhu C."/>
            <person name="Berger M.F."/>
            <person name="Camargo A.A."/>
            <person name="Kelley F."/>
            <person name="McCarron S."/>
            <person name="Jepson D."/>
            <person name="Richardson A."/>
            <person name="Raphael J."/>
            <person name="Moreira D."/>
            <person name="Taycher E."/>
            <person name="Zuo D."/>
            <person name="Mohr S."/>
            <person name="Kane M.F."/>
            <person name="Williamson J."/>
            <person name="Simpson A.J.G."/>
            <person name="Bulyk M.L."/>
            <person name="Harlow E."/>
            <person name="Marsischky G."/>
            <person name="Kolodner R.D."/>
            <person name="LaBaer J."/>
        </authorList>
    </citation>
    <scope>NUCLEOTIDE SEQUENCE [GENOMIC DNA]</scope>
    <source>
        <strain>ATCC 204508 / S288c</strain>
    </source>
</reference>
<reference key="5">
    <citation type="journal article" date="1987" name="Gene">
        <title>Regulation of arginine metabolism in Saccharomyces cerevisiae: expression of the three ARGR regulatory genes and cellular localization of their products.</title>
        <authorList>
            <person name="Bercy J."/>
            <person name="Dubois E."/>
            <person name="Messenguy F."/>
        </authorList>
    </citation>
    <scope>SUBCELLULAR LOCATION</scope>
</reference>
<reference key="6">
    <citation type="journal article" date="1994" name="Biochem. J.">
        <title>Inositol trisphosphate metabolism in Saccharomyces cerevisiae: identification, purification and properties of inositol 1,4,5-trisphosphate 6-kinase.</title>
        <authorList>
            <person name="Estevez F."/>
            <person name="Pulford D."/>
            <person name="Stark M.J."/>
            <person name="Carter A.N."/>
            <person name="Downes C.P."/>
        </authorList>
    </citation>
    <scope>CATALYTIC ACTIVITY</scope>
    <scope>BIOPHYSICOCHEMICAL PROPERTIES</scope>
</reference>
<reference key="7">
    <citation type="journal article" date="1994" name="Mol. Gen. Genet.">
        <title>Pleiotropic function of ArgRIIIp (Arg82p), one of the regulators of arginine metabolism in Saccharomyces cerevisiae. Role in expression of cell-type-specific genes.</title>
        <authorList>
            <person name="Dubois E."/>
            <person name="Messenguy F."/>
        </authorList>
    </citation>
    <scope>FUNCTION</scope>
</reference>
<reference key="8">
    <citation type="journal article" date="1999" name="Curr. Biol.">
        <title>Synthesis of diphosphoinositol pentakisphosphate by a newly identified family of higher inositol polyphosphate kinases.</title>
        <authorList>
            <person name="Saiardi A."/>
            <person name="Erdjument-Bromage H."/>
            <person name="Snowman A.M."/>
            <person name="Tempst P."/>
            <person name="Snyder S.H."/>
        </authorList>
    </citation>
    <scope>FUNCTION</scope>
    <scope>CATALYTIC ACTIVITY</scope>
</reference>
<reference key="9">
    <citation type="journal article" date="1999" name="Science">
        <title>A phospholipase C-dependent inositol polyphosphate kinase pathway required for efficient messenger RNA export.</title>
        <authorList>
            <person name="York J.D."/>
            <person name="Odom A.R."/>
            <person name="Murphy R."/>
            <person name="Ives E.B."/>
            <person name="Wente S.R."/>
        </authorList>
    </citation>
    <scope>FUNCTION</scope>
</reference>
<reference key="10">
    <citation type="journal article" date="2000" name="FEBS Lett.">
        <title>Inositol polyphosphate multikinase (ArgRIII) determines nuclear mRNA export in Saccharomyces cerevisiae.</title>
        <authorList>
            <person name="Saiardi A."/>
            <person name="Caffrey J.J."/>
            <person name="Snyder S.H."/>
            <person name="Shears S.B."/>
        </authorList>
    </citation>
    <scope>FUNCTION</scope>
    <scope>CATALYTIC ACTIVITY</scope>
    <scope>DISRUPTION PHENOTYPE</scope>
</reference>
<reference key="11">
    <citation type="journal article" date="2000" name="FEBS Lett.">
        <title>Inositol polyphosphate kinase activity of Arg82/ArgRIII is not required for the regulation of the arginine metabolism in yeast.</title>
        <authorList>
            <person name="Dubois E."/>
            <person name="Dewaste V."/>
            <person name="Erneux C."/>
            <person name="Messenguy F."/>
        </authorList>
    </citation>
    <scope>FUNCTION</scope>
</reference>
<reference key="12">
    <citation type="journal article" date="2000" name="Mol. Microbiol.">
        <title>Recruitment of the yeast MADS-box proteins, ArgRI and Mcm1 by the pleiotropic factor ArgRIII is required for their stability.</title>
        <authorList>
            <person name="El Bakkoury M."/>
            <person name="Dubois E."/>
            <person name="Messenguy F."/>
        </authorList>
    </citation>
    <scope>INTERACTION WITH ARG80 AND MCM1</scope>
    <scope>FUNCTION</scope>
    <scope>SUBCELLULAR LOCATION</scope>
</reference>
<reference key="13">
    <citation type="journal article" date="2000" name="Science">
        <title>A role for nuclear inositol 1,4,5-trisphosphate kinase in transcriptional control.</title>
        <authorList>
            <person name="Odom A.R."/>
            <person name="Stahlberg A."/>
            <person name="Wente S.R."/>
            <person name="York J.D."/>
        </authorList>
    </citation>
    <scope>FUNCTION</scope>
    <scope>CATALYTIC ACTIVITY</scope>
    <scope>DISRUPTION PHENOTYPE</scope>
</reference>
<reference key="14">
    <citation type="journal article" date="2001" name="FEBS Lett.">
        <title>The transcriptional regulator, Arg82, is a hybrid kinase with both monophosphoinositol and diphosphoinositol polyphosphate synthase activity.</title>
        <authorList>
            <person name="Zhang T."/>
            <person name="Caffrey J.J."/>
            <person name="Shears S.B."/>
        </authorList>
    </citation>
    <scope>FUNCTION</scope>
    <scope>CATALYTIC ACTIVITY</scope>
    <scope>BIOPHYSICOCHEMICAL PROPERTIES</scope>
</reference>
<reference key="15">
    <citation type="journal article" date="2003" name="Mol. Microbiol.">
        <title>Arg82p is a bifunctional protein whose inositol polyphosphate kinase activity is essential for nitrogen and PHO gene expression but not for Mcm1p chaperoning in yeast.</title>
        <authorList>
            <person name="El Alami M."/>
            <person name="Messenguy F."/>
            <person name="Scherens B."/>
            <person name="Dubois E."/>
        </authorList>
    </citation>
    <scope>FUNCTION</scope>
    <scope>MUTAGENESIS OF ASP-131 AND 257-SER--LEU-260</scope>
</reference>
<reference key="16">
    <citation type="journal article" date="2003" name="Nature">
        <title>Global analysis of protein expression in yeast.</title>
        <authorList>
            <person name="Ghaemmaghami S."/>
            <person name="Huh W.-K."/>
            <person name="Bower K."/>
            <person name="Howson R.W."/>
            <person name="Belle A."/>
            <person name="Dephoure N."/>
            <person name="O'Shea E.K."/>
            <person name="Weissman J.S."/>
        </authorList>
    </citation>
    <scope>LEVEL OF PROTEIN EXPRESSION [LARGE SCALE ANALYSIS]</scope>
</reference>
<reference key="17">
    <citation type="journal article" date="2003" name="Science">
        <title>Regulation of chromatin remodeling by inositol polyphosphates.</title>
        <authorList>
            <person name="Steger D.J."/>
            <person name="Haswell E.S."/>
            <person name="Miller A.L."/>
            <person name="Wente S.R."/>
            <person name="O'Shea E.K."/>
        </authorList>
    </citation>
    <scope>FUNCTION</scope>
</reference>
<reference key="18">
    <citation type="journal article" date="2005" name="J. Biol. Chem.">
        <title>Molecular definition of a novel inositol polyphosphate metabolic pathway initiated by inositol 1,4,5-trisphosphate 3-kinase activity in Saccharomyces cerevisiae.</title>
        <authorList>
            <person name="Seeds A.M."/>
            <person name="Bastidas R.J."/>
            <person name="York J.D."/>
        </authorList>
    </citation>
    <scope>FUNCTION</scope>
</reference>
<reference key="19">
    <citation type="journal article" date="2005" name="Proc. Natl. Acad. Sci. U.S.A.">
        <title>Inositol polyphosphate multikinase is a nuclear PI3-kinase with transcriptional regulatory activity.</title>
        <authorList>
            <person name="Resnick A.C."/>
            <person name="Snowman A.M."/>
            <person name="Kang B.N."/>
            <person name="Hurt K.J."/>
            <person name="Snyder S.H."/>
            <person name="Saiardi A."/>
        </authorList>
    </citation>
    <scope>FUNCTION</scope>
    <scope>CATALYTIC ACTIVITY</scope>
    <scope>BIOPHYSICOCHEMICAL PROPERTIES</scope>
    <scope>SUBCELLULAR LOCATION</scope>
    <scope>MUTAGENESIS OF LYS-133</scope>
</reference>
<reference key="20">
    <citation type="journal article" date="2008" name="Mol. Cell. Proteomics">
        <title>A multidimensional chromatography technology for in-depth phosphoproteome analysis.</title>
        <authorList>
            <person name="Albuquerque C.P."/>
            <person name="Smolka M.B."/>
            <person name="Payne S.H."/>
            <person name="Bafna V."/>
            <person name="Eng J."/>
            <person name="Zhou H."/>
        </authorList>
    </citation>
    <scope>IDENTIFICATION BY MASS SPECTROMETRY [LARGE SCALE ANALYSIS]</scope>
</reference>
<reference key="21">
    <citation type="journal article" date="2009" name="Science">
        <title>Global analysis of Cdk1 substrate phosphorylation sites provides insights into evolution.</title>
        <authorList>
            <person name="Holt L.J."/>
            <person name="Tuch B.B."/>
            <person name="Villen J."/>
            <person name="Johnson A.D."/>
            <person name="Gygi S.P."/>
            <person name="Morgan D.O."/>
        </authorList>
    </citation>
    <scope>PHOSPHORYLATION [LARGE SCALE ANALYSIS] AT SER-97</scope>
    <scope>IDENTIFICATION BY MASS SPECTROMETRY [LARGE SCALE ANALYSIS]</scope>
</reference>
<reference key="22">
    <citation type="journal article" date="2012" name="J. Biol. Chem.">
        <title>Arginine transcriptional response does not require inositol phosphate synthesis.</title>
        <authorList>
            <person name="Bosch D."/>
            <person name="Saiardi A."/>
        </authorList>
    </citation>
    <scope>FUNCTION</scope>
</reference>
<reference key="23">
    <citation type="journal article" date="2012" name="Proc. Natl. Acad. Sci. U.S.A.">
        <title>N-terminal acetylome analyses and functional insights of the N-terminal acetyltransferase NatB.</title>
        <authorList>
            <person name="Van Damme P."/>
            <person name="Lasa M."/>
            <person name="Polevoda B."/>
            <person name="Gazquez C."/>
            <person name="Elosegui-Artola A."/>
            <person name="Kim D.S."/>
            <person name="De Juan-Pardo E."/>
            <person name="Demeyer K."/>
            <person name="Hole K."/>
            <person name="Larrea E."/>
            <person name="Timmerman E."/>
            <person name="Prieto J."/>
            <person name="Arnesen T."/>
            <person name="Sherman F."/>
            <person name="Gevaert K."/>
            <person name="Aldabe R."/>
        </authorList>
    </citation>
    <scope>ACETYLATION [LARGE SCALE ANALYSIS] AT MET-1</scope>
    <scope>IDENTIFICATION BY MASS SPECTROMETRY [LARGE SCALE ANALYSIS]</scope>
</reference>
<reference key="24">
    <citation type="journal article" date="2017" name="Proc. Natl. Acad. Sci. U.S.A.">
        <title>[PSI+] prion propagation is controlled by inositol polyphosphates.</title>
        <authorList>
            <person name="Wickner R.B."/>
            <person name="Kelly A.C."/>
            <person name="Bezsonov E.E."/>
            <person name="Edskes H.K."/>
        </authorList>
    </citation>
    <scope>FUNCTION</scope>
    <scope>MUTAGENESIS OF ASP-131 AND LYS-133</scope>
</reference>
<reference evidence="28 29" key="25">
    <citation type="journal article" date="2006" name="J. Biol. Chem.">
        <title>Crystal structure of inositol phosphate multikinase 2 and implications for substrate specificity.</title>
        <authorList>
            <person name="Holmes W."/>
            <person name="Jogl G."/>
        </authorList>
    </citation>
    <scope>X-RAY CRYSTALLOGRAPHY (2.0 ANGSTROMS) IN COMPLEX WITH CALCIUM AND ADP</scope>
</reference>
<feature type="chain" id="PRO_0000066873" description="Inositol polyphosphate multikinase">
    <location>
        <begin position="1"/>
        <end position="355"/>
    </location>
</feature>
<feature type="region of interest" description="Disordered" evidence="2">
    <location>
        <begin position="284"/>
        <end position="317"/>
    </location>
</feature>
<feature type="compositionally biased region" description="Acidic residues" evidence="2">
    <location>
        <begin position="284"/>
        <end position="304"/>
    </location>
</feature>
<feature type="binding site" evidence="15 29">
    <location>
        <position position="31"/>
    </location>
    <ligand>
        <name>ATP</name>
        <dbReference type="ChEBI" id="CHEBI:30616"/>
    </ligand>
</feature>
<feature type="binding site" evidence="15 29">
    <location>
        <begin position="118"/>
        <end position="120"/>
    </location>
    <ligand>
        <name>ATP</name>
        <dbReference type="ChEBI" id="CHEBI:30616"/>
    </ligand>
</feature>
<feature type="binding site" evidence="1">
    <location>
        <begin position="127"/>
        <end position="135"/>
    </location>
    <ligand>
        <name>substrate</name>
    </ligand>
</feature>
<feature type="binding site" evidence="15 29">
    <location>
        <position position="131"/>
    </location>
    <ligand>
        <name>ATP</name>
        <dbReference type="ChEBI" id="CHEBI:30616"/>
    </ligand>
</feature>
<feature type="binding site" evidence="15 28 29">
    <location>
        <position position="271"/>
    </location>
    <ligand>
        <name>Ca(2+)</name>
        <dbReference type="ChEBI" id="CHEBI:29108"/>
    </ligand>
</feature>
<feature type="binding site" evidence="15 28">
    <location>
        <position position="274"/>
    </location>
    <ligand>
        <name>Ca(2+)</name>
        <dbReference type="ChEBI" id="CHEBI:29108"/>
    </ligand>
</feature>
<feature type="binding site" evidence="15 29">
    <location>
        <position position="325"/>
    </location>
    <ligand>
        <name>ATP</name>
        <dbReference type="ChEBI" id="CHEBI:30616"/>
    </ligand>
</feature>
<feature type="binding site" evidence="15 28 29">
    <location>
        <position position="334"/>
    </location>
    <ligand>
        <name>Ca(2+)</name>
        <dbReference type="ChEBI" id="CHEBI:29108"/>
    </ligand>
</feature>
<feature type="modified residue" description="N-acetylmethionine" evidence="31">
    <location>
        <position position="1"/>
    </location>
</feature>
<feature type="modified residue" description="Phosphoserine" evidence="30">
    <location>
        <position position="97"/>
    </location>
</feature>
<feature type="mutagenesis site" description="Abolishes catalytic activity, but preserves its nonkinase transcription regulation functions." evidence="11 17">
    <original>D</original>
    <variation>A</variation>
    <location>
        <position position="131"/>
    </location>
</feature>
<feature type="mutagenesis site" description="Abolishes catalytic activity, but preserves its nonkinase transcription regulation functions." evidence="14 17">
    <original>K</original>
    <variation>A</variation>
    <location>
        <position position="133"/>
    </location>
</feature>
<feature type="mutagenesis site" description="Abolishes catalytic activity." evidence="11">
    <original>SSLL</original>
    <variation>AAAA</variation>
    <location>
        <begin position="257"/>
        <end position="260"/>
    </location>
</feature>
<feature type="sequence conflict" description="In Ref. 4; AAS56022." evidence="24" ref="4">
    <original>E</original>
    <variation>K</variation>
    <location>
        <position position="109"/>
    </location>
</feature>
<feature type="strand" evidence="32">
    <location>
        <begin position="28"/>
        <end position="32"/>
    </location>
</feature>
<feature type="helix" evidence="32">
    <location>
        <begin position="35"/>
        <end position="44"/>
    </location>
</feature>
<feature type="helix" evidence="32">
    <location>
        <begin position="62"/>
        <end position="65"/>
    </location>
</feature>
<feature type="strand" evidence="32">
    <location>
        <begin position="69"/>
        <end position="74"/>
    </location>
</feature>
<feature type="strand" evidence="32">
    <location>
        <begin position="113"/>
        <end position="118"/>
    </location>
</feature>
<feature type="turn" evidence="32">
    <location>
        <begin position="120"/>
        <end position="123"/>
    </location>
</feature>
<feature type="strand" evidence="32">
    <location>
        <begin position="125"/>
        <end position="134"/>
    </location>
</feature>
<feature type="helix" evidence="32">
    <location>
        <begin position="145"/>
        <end position="157"/>
    </location>
</feature>
<feature type="helix" evidence="32">
    <location>
        <begin position="159"/>
        <end position="163"/>
    </location>
</feature>
<feature type="strand" evidence="32">
    <location>
        <begin position="164"/>
        <end position="173"/>
    </location>
</feature>
<feature type="helix" evidence="32">
    <location>
        <begin position="176"/>
        <end position="181"/>
    </location>
</feature>
<feature type="helix" evidence="32">
    <location>
        <begin position="184"/>
        <end position="186"/>
    </location>
</feature>
<feature type="strand" evidence="32">
    <location>
        <begin position="194"/>
        <end position="198"/>
    </location>
</feature>
<feature type="helix" evidence="32">
    <location>
        <begin position="200"/>
        <end position="205"/>
    </location>
</feature>
<feature type="turn" evidence="32">
    <location>
        <begin position="208"/>
        <end position="210"/>
    </location>
</feature>
<feature type="helix" evidence="32">
    <location>
        <begin position="211"/>
        <end position="219"/>
    </location>
</feature>
<feature type="helix" evidence="32">
    <location>
        <begin position="226"/>
        <end position="249"/>
    </location>
</feature>
<feature type="strand" evidence="32">
    <location>
        <begin position="252"/>
        <end position="264"/>
    </location>
</feature>
<feature type="helix" evidence="32">
    <location>
        <begin position="267"/>
        <end position="272"/>
    </location>
</feature>
<feature type="turn" evidence="32">
    <location>
        <begin position="273"/>
        <end position="275"/>
    </location>
</feature>
<feature type="strand" evidence="32">
    <location>
        <begin position="319"/>
        <end position="324"/>
    </location>
</feature>
<feature type="strand" evidence="32">
    <location>
        <begin position="329"/>
        <end position="331"/>
    </location>
</feature>
<feature type="helix" evidence="32">
    <location>
        <begin position="339"/>
        <end position="355"/>
    </location>
</feature>
<sequence>MDTVNNYRVLEHKAAGHDGTLTDGDGLLIFKPAFPQELEFYKAIQVRDVSRRKSSADGDAPLCSWMPTYLGVLNEGAKIEQSGDAALLKIDERLSDSTDNLDSIPVKSEKSKQYLVLENLLYGFSKPNILDIKLGKTLYDSKASLEKRERMKRVSETTTSGSLGFRICGMKIQKNPSVLNQLSLEYYEEEADSDYIFINKLYGRSRTDQNVSDAIELYFNNPHLSDARKHQLKKTFLKRLQLFYNTMLEEEVRMISSSLLFIYEGDPERWELLNDVDKLMRDDFIDDDDDDDDNDDDDDDDAEGSSEGPKDKKTTGSLSSMSLIDFAHSEITPGKGYDENVIEGVETLLDIFMKF</sequence>
<protein>
    <recommendedName>
        <fullName evidence="24">Inositol polyphosphate multikinase</fullName>
        <shortName>IPMK</shortName>
        <ecNumber>2.7.1.127</ecNumber>
        <ecNumber>2.7.1.151</ecNumber>
    </recommendedName>
    <alternativeName>
        <fullName>Arginine metabolism regulation protein III</fullName>
    </alternativeName>
    <alternativeName>
        <fullName evidence="22">GLE1 synthetic lethal protein 3</fullName>
    </alternativeName>
    <alternativeName>
        <fullName evidence="23">Inositol polyphosphate kinase 2</fullName>
    </alternativeName>
</protein>
<dbReference type="EC" id="2.7.1.127"/>
<dbReference type="EC" id="2.7.1.151"/>
<dbReference type="EMBL" id="X05328">
    <property type="protein sequence ID" value="CAA28945.1"/>
    <property type="molecule type" value="Genomic_DNA"/>
</dbReference>
<dbReference type="EMBL" id="Z46727">
    <property type="protein sequence ID" value="CAA86678.1"/>
    <property type="molecule type" value="Genomic_DNA"/>
</dbReference>
<dbReference type="EMBL" id="AY557696">
    <property type="protein sequence ID" value="AAS56022.1"/>
    <property type="molecule type" value="Genomic_DNA"/>
</dbReference>
<dbReference type="EMBL" id="BK006938">
    <property type="protein sequence ID" value="DAA12015.1"/>
    <property type="molecule type" value="Genomic_DNA"/>
</dbReference>
<dbReference type="PIR" id="S05823">
    <property type="entry name" value="RGBYR3"/>
</dbReference>
<dbReference type="RefSeq" id="NP_010458.3">
    <property type="nucleotide sequence ID" value="NM_001180480.3"/>
</dbReference>
<dbReference type="PDB" id="2IEW">
    <property type="method" value="X-ray"/>
    <property type="resolution" value="2.00 A"/>
    <property type="chains" value="A/B=1-355"/>
</dbReference>
<dbReference type="PDB" id="2IF8">
    <property type="method" value="X-ray"/>
    <property type="resolution" value="2.40 A"/>
    <property type="chains" value="A/B=1-355"/>
</dbReference>
<dbReference type="PDBsum" id="2IEW"/>
<dbReference type="PDBsum" id="2IF8"/>
<dbReference type="SMR" id="P07250"/>
<dbReference type="BioGRID" id="32226">
    <property type="interactions" value="46"/>
</dbReference>
<dbReference type="ComplexPortal" id="CPX-1152">
    <property type="entry name" value="ARGR-MCM1 transcription regulation complex"/>
</dbReference>
<dbReference type="DIP" id="DIP-1242N"/>
<dbReference type="FunCoup" id="P07250">
    <property type="interactions" value="100"/>
</dbReference>
<dbReference type="IntAct" id="P07250">
    <property type="interactions" value="3"/>
</dbReference>
<dbReference type="MINT" id="P07250"/>
<dbReference type="STRING" id="4932.YDR173C"/>
<dbReference type="SwissLipids" id="SLP:000000958"/>
<dbReference type="MoonProt" id="P07250"/>
<dbReference type="iPTMnet" id="P07250"/>
<dbReference type="PaxDb" id="4932-YDR173C"/>
<dbReference type="PeptideAtlas" id="P07250"/>
<dbReference type="EnsemblFungi" id="YDR173C_mRNA">
    <property type="protein sequence ID" value="YDR173C"/>
    <property type="gene ID" value="YDR173C"/>
</dbReference>
<dbReference type="GeneID" id="851753"/>
<dbReference type="KEGG" id="sce:YDR173C"/>
<dbReference type="AGR" id="SGD:S000002580"/>
<dbReference type="SGD" id="S000002580">
    <property type="gene designation" value="ARG82"/>
</dbReference>
<dbReference type="VEuPathDB" id="FungiDB:YDR173C"/>
<dbReference type="eggNOG" id="KOG1620">
    <property type="taxonomic scope" value="Eukaryota"/>
</dbReference>
<dbReference type="GeneTree" id="ENSGT00940000167316"/>
<dbReference type="HOGENOM" id="CLU_042569_3_0_1"/>
<dbReference type="InParanoid" id="P07250"/>
<dbReference type="OMA" id="FRICGMK"/>
<dbReference type="OrthoDB" id="338650at2759"/>
<dbReference type="BioCyc" id="MetaCyc:MONOMER3O-64"/>
<dbReference type="BioCyc" id="YEAST:MONOMER3O-64"/>
<dbReference type="Reactome" id="R-SCE-1855167">
    <property type="pathway name" value="Synthesis of pyrophosphates in the cytosol"/>
</dbReference>
<dbReference type="Reactome" id="R-SCE-1855191">
    <property type="pathway name" value="Synthesis of IPs in the nucleus"/>
</dbReference>
<dbReference type="SABIO-RK" id="P07250"/>
<dbReference type="BioGRID-ORCS" id="851753">
    <property type="hits" value="0 hits in 10 CRISPR screens"/>
</dbReference>
<dbReference type="EvolutionaryTrace" id="P07250"/>
<dbReference type="PRO" id="PR:P07250"/>
<dbReference type="Proteomes" id="UP000002311">
    <property type="component" value="Chromosome IV"/>
</dbReference>
<dbReference type="RNAct" id="P07250">
    <property type="molecule type" value="protein"/>
</dbReference>
<dbReference type="GO" id="GO:0005737">
    <property type="term" value="C:cytoplasm"/>
    <property type="evidence" value="ECO:0000318"/>
    <property type="project" value="GO_Central"/>
</dbReference>
<dbReference type="GO" id="GO:0005634">
    <property type="term" value="C:nucleus"/>
    <property type="evidence" value="ECO:0000314"/>
    <property type="project" value="SGD"/>
</dbReference>
<dbReference type="GO" id="GO:0090575">
    <property type="term" value="C:RNA polymerase II transcription regulator complex"/>
    <property type="evidence" value="ECO:0000303"/>
    <property type="project" value="ComplexPortal"/>
</dbReference>
<dbReference type="GO" id="GO:0016303">
    <property type="term" value="F:1-phosphatidylinositol-3-kinase activity"/>
    <property type="evidence" value="ECO:0000314"/>
    <property type="project" value="SGD"/>
</dbReference>
<dbReference type="GO" id="GO:0046934">
    <property type="term" value="F:1-phosphatidylinositol-4,5-bisphosphate 3-kinase activity"/>
    <property type="evidence" value="ECO:0007669"/>
    <property type="project" value="RHEA"/>
</dbReference>
<dbReference type="GO" id="GO:0005524">
    <property type="term" value="F:ATP binding"/>
    <property type="evidence" value="ECO:0007669"/>
    <property type="project" value="UniProtKB-KW"/>
</dbReference>
<dbReference type="GO" id="GO:0000827">
    <property type="term" value="F:inositol-1,3,4,5,6-pentakisphosphate kinase activity"/>
    <property type="evidence" value="ECO:0000314"/>
    <property type="project" value="SGD"/>
</dbReference>
<dbReference type="GO" id="GO:0000825">
    <property type="term" value="F:inositol-1,3,4,5-tetrakisphosphate 6-kinase activity"/>
    <property type="evidence" value="ECO:0000314"/>
    <property type="project" value="SGD"/>
</dbReference>
<dbReference type="GO" id="GO:0000824">
    <property type="term" value="F:inositol-1,4,5,6-tetrakisphosphate 3-kinase activity"/>
    <property type="evidence" value="ECO:0000314"/>
    <property type="project" value="SGD"/>
</dbReference>
<dbReference type="GO" id="GO:0008440">
    <property type="term" value="F:inositol-1,4,5-trisphosphate 3-kinase activity"/>
    <property type="evidence" value="ECO:0000315"/>
    <property type="project" value="SGD"/>
</dbReference>
<dbReference type="GO" id="GO:0000823">
    <property type="term" value="F:inositol-1,4,5-trisphosphate 6-kinase activity"/>
    <property type="evidence" value="ECO:0000314"/>
    <property type="project" value="SGD"/>
</dbReference>
<dbReference type="GO" id="GO:0046872">
    <property type="term" value="F:metal ion binding"/>
    <property type="evidence" value="ECO:0007669"/>
    <property type="project" value="UniProtKB-KW"/>
</dbReference>
<dbReference type="GO" id="GO:0030674">
    <property type="term" value="F:protein-macromolecule adaptor activity"/>
    <property type="evidence" value="ECO:0000315"/>
    <property type="project" value="SGD"/>
</dbReference>
<dbReference type="GO" id="GO:0006525">
    <property type="term" value="P:arginine metabolic process"/>
    <property type="evidence" value="ECO:0007669"/>
    <property type="project" value="UniProtKB-KW"/>
</dbReference>
<dbReference type="GO" id="GO:0032958">
    <property type="term" value="P:inositol phosphate biosynthetic process"/>
    <property type="evidence" value="ECO:0000314"/>
    <property type="project" value="SGD"/>
</dbReference>
<dbReference type="GO" id="GO:0016236">
    <property type="term" value="P:macroautophagy"/>
    <property type="evidence" value="ECO:0000315"/>
    <property type="project" value="SGD"/>
</dbReference>
<dbReference type="GO" id="GO:0000122">
    <property type="term" value="P:negative regulation of transcription by RNA polymerase II"/>
    <property type="evidence" value="ECO:0000315"/>
    <property type="project" value="SGD"/>
</dbReference>
<dbReference type="GO" id="GO:0046854">
    <property type="term" value="P:phosphatidylinositol phosphate biosynthetic process"/>
    <property type="evidence" value="ECO:0000314"/>
    <property type="project" value="SGD"/>
</dbReference>
<dbReference type="GO" id="GO:0045944">
    <property type="term" value="P:positive regulation of transcription by RNA polymerase II"/>
    <property type="evidence" value="ECO:0000315"/>
    <property type="project" value="SGD"/>
</dbReference>
<dbReference type="GO" id="GO:0050821">
    <property type="term" value="P:protein stabilization"/>
    <property type="evidence" value="ECO:0000315"/>
    <property type="project" value="SGD"/>
</dbReference>
<dbReference type="GO" id="GO:0000821">
    <property type="term" value="P:regulation of arginine metabolic process"/>
    <property type="evidence" value="ECO:0000315"/>
    <property type="project" value="SGD"/>
</dbReference>
<dbReference type="Gene3D" id="3.30.470.160">
    <property type="entry name" value="Inositol polyphosphate kinase"/>
    <property type="match status" value="1"/>
</dbReference>
<dbReference type="InterPro" id="IPR005522">
    <property type="entry name" value="IPK"/>
</dbReference>
<dbReference type="InterPro" id="IPR038286">
    <property type="entry name" value="IPK_sf"/>
</dbReference>
<dbReference type="PANTHER" id="PTHR12400">
    <property type="entry name" value="INOSITOL POLYPHOSPHATE KINASE"/>
    <property type="match status" value="1"/>
</dbReference>
<dbReference type="PANTHER" id="PTHR12400:SF103">
    <property type="entry name" value="INOSITOL POLYPHOSPHATE MULTIKINASE"/>
    <property type="match status" value="1"/>
</dbReference>
<dbReference type="Pfam" id="PF03770">
    <property type="entry name" value="IPK"/>
    <property type="match status" value="1"/>
</dbReference>
<dbReference type="SUPFAM" id="SSF56104">
    <property type="entry name" value="SAICAR synthase-like"/>
    <property type="match status" value="1"/>
</dbReference>
<name>IPMK_YEAST</name>
<proteinExistence type="evidence at protein level"/>
<organism>
    <name type="scientific">Saccharomyces cerevisiae (strain ATCC 204508 / S288c)</name>
    <name type="common">Baker's yeast</name>
    <dbReference type="NCBI Taxonomy" id="559292"/>
    <lineage>
        <taxon>Eukaryota</taxon>
        <taxon>Fungi</taxon>
        <taxon>Dikarya</taxon>
        <taxon>Ascomycota</taxon>
        <taxon>Saccharomycotina</taxon>
        <taxon>Saccharomycetes</taxon>
        <taxon>Saccharomycetales</taxon>
        <taxon>Saccharomycetaceae</taxon>
        <taxon>Saccharomyces</taxon>
    </lineage>
</organism>